<gene>
    <name evidence="1" type="primary">ispF</name>
    <name type="ordered locus">E2348C_3016</name>
</gene>
<keyword id="KW-0414">Isoprene biosynthesis</keyword>
<keyword id="KW-0456">Lyase</keyword>
<keyword id="KW-0479">Metal-binding</keyword>
<keyword id="KW-1185">Reference proteome</keyword>
<comment type="function">
    <text evidence="1">Involved in the biosynthesis of isopentenyl diphosphate (IPP) and dimethylallyl diphosphate (DMAPP), two major building blocks of isoprenoid compounds. Catalyzes the conversion of 4-diphosphocytidyl-2-C-methyl-D-erythritol 2-phosphate (CDP-ME2P) to 2-C-methyl-D-erythritol 2,4-cyclodiphosphate (ME-CPP) with a corresponding release of cytidine 5-monophosphate (CMP).</text>
</comment>
<comment type="catalytic activity">
    <reaction evidence="1">
        <text>4-CDP-2-C-methyl-D-erythritol 2-phosphate = 2-C-methyl-D-erythritol 2,4-cyclic diphosphate + CMP</text>
        <dbReference type="Rhea" id="RHEA:23864"/>
        <dbReference type="ChEBI" id="CHEBI:57919"/>
        <dbReference type="ChEBI" id="CHEBI:58483"/>
        <dbReference type="ChEBI" id="CHEBI:60377"/>
        <dbReference type="EC" id="4.6.1.12"/>
    </reaction>
</comment>
<comment type="cofactor">
    <cofactor evidence="1">
        <name>a divalent metal cation</name>
        <dbReference type="ChEBI" id="CHEBI:60240"/>
    </cofactor>
    <text evidence="1">Binds 1 divalent metal cation per subunit.</text>
</comment>
<comment type="pathway">
    <text evidence="1">Isoprenoid biosynthesis; isopentenyl diphosphate biosynthesis via DXP pathway; isopentenyl diphosphate from 1-deoxy-D-xylulose 5-phosphate: step 4/6.</text>
</comment>
<comment type="subunit">
    <text evidence="1">Homotrimer.</text>
</comment>
<comment type="similarity">
    <text evidence="1">Belongs to the IspF family.</text>
</comment>
<protein>
    <recommendedName>
        <fullName evidence="1">2-C-methyl-D-erythritol 2,4-cyclodiphosphate synthase</fullName>
        <shortName evidence="1">MECDP-synthase</shortName>
        <shortName evidence="1">MECPP-synthase</shortName>
        <shortName evidence="1">MECPS</shortName>
        <ecNumber evidence="1">4.6.1.12</ecNumber>
    </recommendedName>
</protein>
<accession>B7UHG5</accession>
<dbReference type="EC" id="4.6.1.12" evidence="1"/>
<dbReference type="EMBL" id="FM180568">
    <property type="protein sequence ID" value="CAS10564.1"/>
    <property type="molecule type" value="Genomic_DNA"/>
</dbReference>
<dbReference type="RefSeq" id="WP_001219250.1">
    <property type="nucleotide sequence ID" value="NC_011601.1"/>
</dbReference>
<dbReference type="SMR" id="B7UHG5"/>
<dbReference type="KEGG" id="ecg:E2348C_3016"/>
<dbReference type="HOGENOM" id="CLU_084630_2_0_6"/>
<dbReference type="UniPathway" id="UPA00056">
    <property type="reaction ID" value="UER00095"/>
</dbReference>
<dbReference type="Proteomes" id="UP000008205">
    <property type="component" value="Chromosome"/>
</dbReference>
<dbReference type="GO" id="GO:0008685">
    <property type="term" value="F:2-C-methyl-D-erythritol 2,4-cyclodiphosphate synthase activity"/>
    <property type="evidence" value="ECO:0007669"/>
    <property type="project" value="UniProtKB-UniRule"/>
</dbReference>
<dbReference type="GO" id="GO:0046872">
    <property type="term" value="F:metal ion binding"/>
    <property type="evidence" value="ECO:0007669"/>
    <property type="project" value="UniProtKB-KW"/>
</dbReference>
<dbReference type="GO" id="GO:0019288">
    <property type="term" value="P:isopentenyl diphosphate biosynthetic process, methylerythritol 4-phosphate pathway"/>
    <property type="evidence" value="ECO:0007669"/>
    <property type="project" value="UniProtKB-UniRule"/>
</dbReference>
<dbReference type="GO" id="GO:0016114">
    <property type="term" value="P:terpenoid biosynthetic process"/>
    <property type="evidence" value="ECO:0007669"/>
    <property type="project" value="InterPro"/>
</dbReference>
<dbReference type="CDD" id="cd00554">
    <property type="entry name" value="MECDP_synthase"/>
    <property type="match status" value="1"/>
</dbReference>
<dbReference type="FunFam" id="3.30.1330.50:FF:000001">
    <property type="entry name" value="2-C-methyl-D-erythritol 2,4-cyclodiphosphate synthase"/>
    <property type="match status" value="1"/>
</dbReference>
<dbReference type="Gene3D" id="3.30.1330.50">
    <property type="entry name" value="2-C-methyl-D-erythritol 2,4-cyclodiphosphate synthase"/>
    <property type="match status" value="1"/>
</dbReference>
<dbReference type="HAMAP" id="MF_00107">
    <property type="entry name" value="IspF"/>
    <property type="match status" value="1"/>
</dbReference>
<dbReference type="InterPro" id="IPR003526">
    <property type="entry name" value="MECDP_synthase"/>
</dbReference>
<dbReference type="InterPro" id="IPR020555">
    <property type="entry name" value="MECDP_synthase_CS"/>
</dbReference>
<dbReference type="InterPro" id="IPR036571">
    <property type="entry name" value="MECDP_synthase_sf"/>
</dbReference>
<dbReference type="NCBIfam" id="TIGR00151">
    <property type="entry name" value="ispF"/>
    <property type="match status" value="1"/>
</dbReference>
<dbReference type="PANTHER" id="PTHR43181">
    <property type="entry name" value="2-C-METHYL-D-ERYTHRITOL 2,4-CYCLODIPHOSPHATE SYNTHASE, CHLOROPLASTIC"/>
    <property type="match status" value="1"/>
</dbReference>
<dbReference type="PANTHER" id="PTHR43181:SF1">
    <property type="entry name" value="2-C-METHYL-D-ERYTHRITOL 2,4-CYCLODIPHOSPHATE SYNTHASE, CHLOROPLASTIC"/>
    <property type="match status" value="1"/>
</dbReference>
<dbReference type="Pfam" id="PF02542">
    <property type="entry name" value="YgbB"/>
    <property type="match status" value="1"/>
</dbReference>
<dbReference type="SUPFAM" id="SSF69765">
    <property type="entry name" value="IpsF-like"/>
    <property type="match status" value="1"/>
</dbReference>
<dbReference type="PROSITE" id="PS01350">
    <property type="entry name" value="ISPF"/>
    <property type="match status" value="1"/>
</dbReference>
<sequence length="159" mass="16882">MRIGHGFDVHAFGGEGPIIIGGVRIPYEKGLLAHSDGDVALHALTDALLGAAAQGDIGKLFPDTDPAFKGADSRELLREAWRRIQAKGYALGNVDVTIIAQAPKMLPHIPQMRVFIAEDLGCHMDDVNVKATTTEKLGFTGRGEGIACEAVALLIKATK</sequence>
<evidence type="ECO:0000255" key="1">
    <source>
        <dbReference type="HAMAP-Rule" id="MF_00107"/>
    </source>
</evidence>
<organism>
    <name type="scientific">Escherichia coli O127:H6 (strain E2348/69 / EPEC)</name>
    <dbReference type="NCBI Taxonomy" id="574521"/>
    <lineage>
        <taxon>Bacteria</taxon>
        <taxon>Pseudomonadati</taxon>
        <taxon>Pseudomonadota</taxon>
        <taxon>Gammaproteobacteria</taxon>
        <taxon>Enterobacterales</taxon>
        <taxon>Enterobacteriaceae</taxon>
        <taxon>Escherichia</taxon>
    </lineage>
</organism>
<feature type="chain" id="PRO_1000190708" description="2-C-methyl-D-erythritol 2,4-cyclodiphosphate synthase">
    <location>
        <begin position="1"/>
        <end position="159"/>
    </location>
</feature>
<feature type="binding site" evidence="1">
    <location>
        <begin position="8"/>
        <end position="10"/>
    </location>
    <ligand>
        <name>4-CDP-2-C-methyl-D-erythritol 2-phosphate</name>
        <dbReference type="ChEBI" id="CHEBI:57919"/>
    </ligand>
</feature>
<feature type="binding site" evidence="1">
    <location>
        <position position="8"/>
    </location>
    <ligand>
        <name>a divalent metal cation</name>
        <dbReference type="ChEBI" id="CHEBI:60240"/>
    </ligand>
</feature>
<feature type="binding site" evidence="1">
    <location>
        <position position="10"/>
    </location>
    <ligand>
        <name>a divalent metal cation</name>
        <dbReference type="ChEBI" id="CHEBI:60240"/>
    </ligand>
</feature>
<feature type="binding site" evidence="1">
    <location>
        <begin position="34"/>
        <end position="35"/>
    </location>
    <ligand>
        <name>4-CDP-2-C-methyl-D-erythritol 2-phosphate</name>
        <dbReference type="ChEBI" id="CHEBI:57919"/>
    </ligand>
</feature>
<feature type="binding site" evidence="1">
    <location>
        <position position="42"/>
    </location>
    <ligand>
        <name>a divalent metal cation</name>
        <dbReference type="ChEBI" id="CHEBI:60240"/>
    </ligand>
</feature>
<feature type="binding site" evidence="1">
    <location>
        <begin position="56"/>
        <end position="58"/>
    </location>
    <ligand>
        <name>4-CDP-2-C-methyl-D-erythritol 2-phosphate</name>
        <dbReference type="ChEBI" id="CHEBI:57919"/>
    </ligand>
</feature>
<feature type="binding site" evidence="1">
    <location>
        <begin position="61"/>
        <end position="65"/>
    </location>
    <ligand>
        <name>4-CDP-2-C-methyl-D-erythritol 2-phosphate</name>
        <dbReference type="ChEBI" id="CHEBI:57919"/>
    </ligand>
</feature>
<feature type="binding site" evidence="1">
    <location>
        <begin position="100"/>
        <end position="106"/>
    </location>
    <ligand>
        <name>4-CDP-2-C-methyl-D-erythritol 2-phosphate</name>
        <dbReference type="ChEBI" id="CHEBI:57919"/>
    </ligand>
</feature>
<feature type="binding site" evidence="1">
    <location>
        <begin position="132"/>
        <end position="135"/>
    </location>
    <ligand>
        <name>4-CDP-2-C-methyl-D-erythritol 2-phosphate</name>
        <dbReference type="ChEBI" id="CHEBI:57919"/>
    </ligand>
</feature>
<feature type="binding site" evidence="1">
    <location>
        <position position="139"/>
    </location>
    <ligand>
        <name>4-CDP-2-C-methyl-D-erythritol 2-phosphate</name>
        <dbReference type="ChEBI" id="CHEBI:57919"/>
    </ligand>
</feature>
<feature type="binding site" evidence="1">
    <location>
        <position position="142"/>
    </location>
    <ligand>
        <name>4-CDP-2-C-methyl-D-erythritol 2-phosphate</name>
        <dbReference type="ChEBI" id="CHEBI:57919"/>
    </ligand>
</feature>
<feature type="site" description="Transition state stabilizer" evidence="1">
    <location>
        <position position="34"/>
    </location>
</feature>
<feature type="site" description="Transition state stabilizer" evidence="1">
    <location>
        <position position="133"/>
    </location>
</feature>
<reference key="1">
    <citation type="journal article" date="2009" name="J. Bacteriol.">
        <title>Complete genome sequence and comparative genome analysis of enteropathogenic Escherichia coli O127:H6 strain E2348/69.</title>
        <authorList>
            <person name="Iguchi A."/>
            <person name="Thomson N.R."/>
            <person name="Ogura Y."/>
            <person name="Saunders D."/>
            <person name="Ooka T."/>
            <person name="Henderson I.R."/>
            <person name="Harris D."/>
            <person name="Asadulghani M."/>
            <person name="Kurokawa K."/>
            <person name="Dean P."/>
            <person name="Kenny B."/>
            <person name="Quail M.A."/>
            <person name="Thurston S."/>
            <person name="Dougan G."/>
            <person name="Hayashi T."/>
            <person name="Parkhill J."/>
            <person name="Frankel G."/>
        </authorList>
    </citation>
    <scope>NUCLEOTIDE SEQUENCE [LARGE SCALE GENOMIC DNA]</scope>
    <source>
        <strain>E2348/69 / EPEC</strain>
    </source>
</reference>
<proteinExistence type="inferred from homology"/>
<name>ISPF_ECO27</name>